<sequence>MHTLPVKTGTRPLAQVQKLIPGLLLSAALAGVAILLGRSQWLQHNGISALTLAIVLGILVGNTLYPRIAAGSAAGVGFSKQILLRAGIILYGLRLTFQDIAGVGLHGVLLDALMLASTFGLACLLGTRLFGLDRTTTLLIGAGSSICGAAAVMATEPVVRGRAEQVAVAVSTVVVFGTLGIFLYPALFQLDQDWGLLPRDPGTWGVYIGATVHEVAQVVAAGRSIGIEAADTAVIAKMVRVMMLAPFLILLSAWLARDKAHRRQHSGATKITIPWFAVGFVLVAGLNSLVSLPPALVSHVNDLDTFLLAMAMAGLGLGTHLSAIRRAGLKPLLLAALLFAWLVLGGGFLTRLALA</sequence>
<reference key="1">
    <citation type="journal article" date="2000" name="Nature">
        <title>Complete genome sequence of Pseudomonas aeruginosa PAO1, an opportunistic pathogen.</title>
        <authorList>
            <person name="Stover C.K."/>
            <person name="Pham X.-Q.T."/>
            <person name="Erwin A.L."/>
            <person name="Mizoguchi S.D."/>
            <person name="Warrener P."/>
            <person name="Hickey M.J."/>
            <person name="Brinkman F.S.L."/>
            <person name="Hufnagle W.O."/>
            <person name="Kowalik D.J."/>
            <person name="Lagrou M."/>
            <person name="Garber R.L."/>
            <person name="Goltry L."/>
            <person name="Tolentino E."/>
            <person name="Westbrock-Wadman S."/>
            <person name="Yuan Y."/>
            <person name="Brody L.L."/>
            <person name="Coulter S.N."/>
            <person name="Folger K.R."/>
            <person name="Kas A."/>
            <person name="Larbig K."/>
            <person name="Lim R.M."/>
            <person name="Smith K.A."/>
            <person name="Spencer D.H."/>
            <person name="Wong G.K.-S."/>
            <person name="Wu Z."/>
            <person name="Paulsen I.T."/>
            <person name="Reizer J."/>
            <person name="Saier M.H. Jr."/>
            <person name="Hancock R.E.W."/>
            <person name="Lory S."/>
            <person name="Olson M.V."/>
        </authorList>
    </citation>
    <scope>NUCLEOTIDE SEQUENCE [LARGE SCALE GENOMIC DNA]</scope>
    <source>
        <strain>ATCC 15692 / DSM 22644 / CIP 104116 / JCM 14847 / LMG 12228 / 1C / PRS 101 / PAO1</strain>
    </source>
</reference>
<keyword id="KW-1003">Cell membrane</keyword>
<keyword id="KW-0472">Membrane</keyword>
<keyword id="KW-1185">Reference proteome</keyword>
<keyword id="KW-0812">Transmembrane</keyword>
<keyword id="KW-1133">Transmembrane helix</keyword>
<accession>Q9HTI1</accession>
<organism>
    <name type="scientific">Pseudomonas aeruginosa (strain ATCC 15692 / DSM 22644 / CIP 104116 / JCM 14847 / LMG 12228 / 1C / PRS 101 / PAO1)</name>
    <dbReference type="NCBI Taxonomy" id="208964"/>
    <lineage>
        <taxon>Bacteria</taxon>
        <taxon>Pseudomonadati</taxon>
        <taxon>Pseudomonadota</taxon>
        <taxon>Gammaproteobacteria</taxon>
        <taxon>Pseudomonadales</taxon>
        <taxon>Pseudomonadaceae</taxon>
        <taxon>Pseudomonas</taxon>
    </lineage>
</organism>
<dbReference type="EMBL" id="AE004091">
    <property type="protein sequence ID" value="AAG08768.1"/>
    <property type="molecule type" value="Genomic_DNA"/>
</dbReference>
<dbReference type="PIR" id="C82972">
    <property type="entry name" value="C82972"/>
</dbReference>
<dbReference type="RefSeq" id="NP_254070.1">
    <property type="nucleotide sequence ID" value="NC_002516.2"/>
</dbReference>
<dbReference type="RefSeq" id="WP_003114439.1">
    <property type="nucleotide sequence ID" value="NZ_QZGE01000031.1"/>
</dbReference>
<dbReference type="FunCoup" id="Q9HTI1">
    <property type="interactions" value="105"/>
</dbReference>
<dbReference type="PaxDb" id="208964-PA5383"/>
<dbReference type="GeneID" id="881410"/>
<dbReference type="KEGG" id="pae:PA5383"/>
<dbReference type="PATRIC" id="fig|208964.12.peg.5643"/>
<dbReference type="PseudoCAP" id="PA5383"/>
<dbReference type="HOGENOM" id="CLU_033541_0_0_6"/>
<dbReference type="InParanoid" id="Q9HTI1"/>
<dbReference type="OrthoDB" id="9805703at2"/>
<dbReference type="PhylomeDB" id="Q9HTI1"/>
<dbReference type="BioCyc" id="PAER208964:G1FZ6-5510-MONOMER"/>
<dbReference type="Proteomes" id="UP000002438">
    <property type="component" value="Chromosome"/>
</dbReference>
<dbReference type="GO" id="GO:0005886">
    <property type="term" value="C:plasma membrane"/>
    <property type="evidence" value="ECO:0000318"/>
    <property type="project" value="GO_Central"/>
</dbReference>
<dbReference type="InterPro" id="IPR018383">
    <property type="entry name" value="UPF0324_pro"/>
</dbReference>
<dbReference type="InterPro" id="IPR004630">
    <property type="entry name" value="UPF0324_YeiH-like"/>
</dbReference>
<dbReference type="NCBIfam" id="TIGR00698">
    <property type="entry name" value="YeiH family putative sulfate export transporter"/>
    <property type="match status" value="1"/>
</dbReference>
<dbReference type="PANTHER" id="PTHR30106">
    <property type="entry name" value="INNER MEMBRANE PROTEIN YEIH-RELATED"/>
    <property type="match status" value="1"/>
</dbReference>
<dbReference type="PANTHER" id="PTHR30106:SF2">
    <property type="entry name" value="UPF0324 INNER MEMBRANE PROTEIN YEIH"/>
    <property type="match status" value="1"/>
</dbReference>
<dbReference type="Pfam" id="PF03601">
    <property type="entry name" value="Cons_hypoth698"/>
    <property type="match status" value="1"/>
</dbReference>
<name>Y5383_PSEAE</name>
<proteinExistence type="inferred from homology"/>
<gene>
    <name type="ordered locus">PA5383</name>
</gene>
<feature type="chain" id="PRO_0000157439" description="UPF0324 membrane protein PA5383">
    <location>
        <begin position="1"/>
        <end position="355"/>
    </location>
</feature>
<feature type="transmembrane region" description="Helical" evidence="1">
    <location>
        <begin position="20"/>
        <end position="37"/>
    </location>
</feature>
<feature type="transmembrane region" description="Helical" evidence="1">
    <location>
        <begin position="44"/>
        <end position="66"/>
    </location>
</feature>
<feature type="transmembrane region" description="Helical" evidence="1">
    <location>
        <begin position="71"/>
        <end position="93"/>
    </location>
</feature>
<feature type="transmembrane region" description="Helical" evidence="1">
    <location>
        <begin position="100"/>
        <end position="122"/>
    </location>
</feature>
<feature type="transmembrane region" description="Helical" evidence="1">
    <location>
        <begin position="137"/>
        <end position="159"/>
    </location>
</feature>
<feature type="transmembrane region" description="Helical" evidence="1">
    <location>
        <begin position="166"/>
        <end position="188"/>
    </location>
</feature>
<feature type="transmembrane region" description="Helical" evidence="1">
    <location>
        <begin position="233"/>
        <end position="255"/>
    </location>
</feature>
<feature type="transmembrane region" description="Helical" evidence="1">
    <location>
        <begin position="275"/>
        <end position="297"/>
    </location>
</feature>
<feature type="transmembrane region" description="Helical" evidence="1">
    <location>
        <begin position="307"/>
        <end position="324"/>
    </location>
</feature>
<feature type="transmembrane region" description="Helical" evidence="1">
    <location>
        <begin position="331"/>
        <end position="353"/>
    </location>
</feature>
<comment type="subcellular location">
    <subcellularLocation>
        <location evidence="2">Cell membrane</location>
        <topology evidence="2">Multi-pass membrane protein</topology>
    </subcellularLocation>
</comment>
<comment type="similarity">
    <text evidence="2">Belongs to the UPF0324 family.</text>
</comment>
<protein>
    <recommendedName>
        <fullName>UPF0324 membrane protein PA5383</fullName>
    </recommendedName>
</protein>
<evidence type="ECO:0000255" key="1"/>
<evidence type="ECO:0000305" key="2"/>